<geneLocation type="chloroplast"/>
<gene>
    <name evidence="2" type="primary">petA</name>
    <name type="ORF">PSC0639</name>
</gene>
<evidence type="ECO:0000250" key="1"/>
<evidence type="ECO:0000255" key="2">
    <source>
        <dbReference type="HAMAP-Rule" id="MF_00610"/>
    </source>
</evidence>
<proteinExistence type="inferred from homology"/>
<protein>
    <recommendedName>
        <fullName evidence="2">Cytochrome f</fullName>
    </recommendedName>
</protein>
<name>CYF_PANGI</name>
<accession>Q68RZ3</accession>
<dbReference type="EMBL" id="AY582139">
    <property type="protein sequence ID" value="AAT98522.1"/>
    <property type="molecule type" value="Genomic_DNA"/>
</dbReference>
<dbReference type="RefSeq" id="YP_086979.1">
    <property type="nucleotide sequence ID" value="NC_006290.1"/>
</dbReference>
<dbReference type="SMR" id="Q68RZ3"/>
<dbReference type="GeneID" id="3021556"/>
<dbReference type="GO" id="GO:0009535">
    <property type="term" value="C:chloroplast thylakoid membrane"/>
    <property type="evidence" value="ECO:0007669"/>
    <property type="project" value="UniProtKB-SubCell"/>
</dbReference>
<dbReference type="GO" id="GO:0009055">
    <property type="term" value="F:electron transfer activity"/>
    <property type="evidence" value="ECO:0007669"/>
    <property type="project" value="UniProtKB-UniRule"/>
</dbReference>
<dbReference type="GO" id="GO:0020037">
    <property type="term" value="F:heme binding"/>
    <property type="evidence" value="ECO:0007669"/>
    <property type="project" value="InterPro"/>
</dbReference>
<dbReference type="GO" id="GO:0005506">
    <property type="term" value="F:iron ion binding"/>
    <property type="evidence" value="ECO:0007669"/>
    <property type="project" value="InterPro"/>
</dbReference>
<dbReference type="GO" id="GO:0015979">
    <property type="term" value="P:photosynthesis"/>
    <property type="evidence" value="ECO:0007669"/>
    <property type="project" value="UniProtKB-UniRule"/>
</dbReference>
<dbReference type="FunFam" id="1.20.5.700:FF:000001">
    <property type="entry name" value="Cytochrome f"/>
    <property type="match status" value="1"/>
</dbReference>
<dbReference type="FunFam" id="2.40.50.100:FF:000007">
    <property type="entry name" value="Cytochrome f"/>
    <property type="match status" value="1"/>
</dbReference>
<dbReference type="FunFam" id="2.60.40.830:FF:000001">
    <property type="entry name" value="Cytochrome f"/>
    <property type="match status" value="1"/>
</dbReference>
<dbReference type="Gene3D" id="2.40.50.100">
    <property type="match status" value="1"/>
</dbReference>
<dbReference type="Gene3D" id="2.60.40.830">
    <property type="entry name" value="Cytochrome f large domain"/>
    <property type="match status" value="1"/>
</dbReference>
<dbReference type="Gene3D" id="1.20.5.700">
    <property type="entry name" value="Single helix bin"/>
    <property type="match status" value="1"/>
</dbReference>
<dbReference type="HAMAP" id="MF_00610">
    <property type="entry name" value="Cytb6_f_cytF"/>
    <property type="match status" value="1"/>
</dbReference>
<dbReference type="InterPro" id="IPR024058">
    <property type="entry name" value="Cyt-f_TM"/>
</dbReference>
<dbReference type="InterPro" id="IPR002325">
    <property type="entry name" value="Cyt_f"/>
</dbReference>
<dbReference type="InterPro" id="IPR024094">
    <property type="entry name" value="Cyt_f_lg_dom"/>
</dbReference>
<dbReference type="InterPro" id="IPR036826">
    <property type="entry name" value="Cyt_f_lg_dom_sf"/>
</dbReference>
<dbReference type="InterPro" id="IPR011054">
    <property type="entry name" value="Rudment_hybrid_motif"/>
</dbReference>
<dbReference type="PANTHER" id="PTHR33288">
    <property type="match status" value="1"/>
</dbReference>
<dbReference type="PANTHER" id="PTHR33288:SF10">
    <property type="entry name" value="CYTOCHROME F"/>
    <property type="match status" value="1"/>
</dbReference>
<dbReference type="Pfam" id="PF01333">
    <property type="entry name" value="Apocytochr_F_C"/>
    <property type="match status" value="1"/>
</dbReference>
<dbReference type="Pfam" id="PF16639">
    <property type="entry name" value="Apocytochr_F_N"/>
    <property type="match status" value="1"/>
</dbReference>
<dbReference type="PRINTS" id="PR00610">
    <property type="entry name" value="CYTOCHROMEF"/>
</dbReference>
<dbReference type="SUPFAM" id="SSF103431">
    <property type="entry name" value="Cytochrome f subunit of the cytochrome b6f complex, transmembrane anchor"/>
    <property type="match status" value="1"/>
</dbReference>
<dbReference type="SUPFAM" id="SSF49441">
    <property type="entry name" value="Cytochrome f, large domain"/>
    <property type="match status" value="1"/>
</dbReference>
<dbReference type="SUPFAM" id="SSF51246">
    <property type="entry name" value="Rudiment single hybrid motif"/>
    <property type="match status" value="1"/>
</dbReference>
<dbReference type="PROSITE" id="PS51010">
    <property type="entry name" value="CYTF"/>
    <property type="match status" value="1"/>
</dbReference>
<comment type="function">
    <text evidence="2">Component of the cytochrome b6-f complex, which mediates electron transfer between photosystem II (PSII) and photosystem I (PSI), cyclic electron flow around PSI, and state transitions.</text>
</comment>
<comment type="cofactor">
    <cofactor evidence="2">
        <name>heme</name>
        <dbReference type="ChEBI" id="CHEBI:30413"/>
    </cofactor>
    <text evidence="2">Binds 1 heme group covalently.</text>
</comment>
<comment type="subunit">
    <text evidence="1">The 4 large subunits of the cytochrome b6-f complex are cytochrome b6, subunit IV (17 kDa polypeptide, petD), cytochrome f and the Rieske protein, while the 4 small subunits are PetG, PetL, PetM and PetN. The complex functions as a dimer (By similarity).</text>
</comment>
<comment type="subcellular location">
    <subcellularLocation>
        <location evidence="2">Plastid</location>
        <location evidence="2">Chloroplast thylakoid membrane</location>
        <topology evidence="2">Single-pass membrane protein</topology>
    </subcellularLocation>
</comment>
<comment type="similarity">
    <text evidence="2">Belongs to the cytochrome f family.</text>
</comment>
<feature type="signal peptide" evidence="2">
    <location>
        <begin position="1"/>
        <end position="35"/>
    </location>
</feature>
<feature type="chain" id="PRO_0000023827" description="Cytochrome f">
    <location>
        <begin position="36"/>
        <end position="320"/>
    </location>
</feature>
<feature type="transmembrane region" description="Helical" evidence="2">
    <location>
        <begin position="286"/>
        <end position="306"/>
    </location>
</feature>
<feature type="binding site" description="axial binding residue" evidence="2">
    <location>
        <position position="36"/>
    </location>
    <ligand>
        <name>heme</name>
        <dbReference type="ChEBI" id="CHEBI:30413"/>
    </ligand>
    <ligandPart>
        <name>Fe</name>
        <dbReference type="ChEBI" id="CHEBI:18248"/>
    </ligandPart>
</feature>
<feature type="binding site" description="covalent" evidence="2">
    <location>
        <position position="56"/>
    </location>
    <ligand>
        <name>heme</name>
        <dbReference type="ChEBI" id="CHEBI:30413"/>
    </ligand>
</feature>
<feature type="binding site" description="covalent" evidence="2">
    <location>
        <position position="59"/>
    </location>
    <ligand>
        <name>heme</name>
        <dbReference type="ChEBI" id="CHEBI:30413"/>
    </ligand>
</feature>
<feature type="binding site" description="axial binding residue" evidence="2">
    <location>
        <position position="60"/>
    </location>
    <ligand>
        <name>heme</name>
        <dbReference type="ChEBI" id="CHEBI:30413"/>
    </ligand>
    <ligandPart>
        <name>Fe</name>
        <dbReference type="ChEBI" id="CHEBI:18248"/>
    </ligandPart>
</feature>
<reference key="1">
    <citation type="journal article" date="2004" name="DNA Res.">
        <title>Complete chloroplast genome sequence from Korea ginseng (Panax schinseng Nees) and comparative analysis of sequence evolution among 17 vascular plants.</title>
        <authorList>
            <person name="Kim K.-J."/>
            <person name="Lee H.-L."/>
        </authorList>
    </citation>
    <scope>NUCLEOTIDE SEQUENCE [LARGE SCALE GENOMIC DNA]</scope>
</reference>
<sequence length="320" mass="35238">MQTRKTFSWIKEQITRSISASLMIYIITRTSISSAYPIFAQQGYENPREATGRIVCANCHLANKPVDIEVPQAVLPDTVFEAVVRIPYDMQLKQVLANGKKGALNVGAVLILPEGFELAPVDRISPEMKERIGNLSFQSYRPTKKNILVIGPVPGQKYSEITFPILSPDPATKKDVHFLKYPIYVGGNRGRGQIYPDGSKSNNTVYNATAAGIVGKIIRKEKGGYEITITDASDGRQVVDIIPPGPELLVSEGESIKFDQPLTSNPNVGGFGQGDAEIVLQDPLRVQGLLFFLASVILAQIFLVLKKKQFEKVQLSEMNF</sequence>
<keyword id="KW-0150">Chloroplast</keyword>
<keyword id="KW-0249">Electron transport</keyword>
<keyword id="KW-0349">Heme</keyword>
<keyword id="KW-0408">Iron</keyword>
<keyword id="KW-0472">Membrane</keyword>
<keyword id="KW-0479">Metal-binding</keyword>
<keyword id="KW-0602">Photosynthesis</keyword>
<keyword id="KW-0934">Plastid</keyword>
<keyword id="KW-0732">Signal</keyword>
<keyword id="KW-0793">Thylakoid</keyword>
<keyword id="KW-0812">Transmembrane</keyword>
<keyword id="KW-1133">Transmembrane helix</keyword>
<keyword id="KW-0813">Transport</keyword>
<organism>
    <name type="scientific">Panax ginseng</name>
    <name type="common">Korean ginseng</name>
    <dbReference type="NCBI Taxonomy" id="4054"/>
    <lineage>
        <taxon>Eukaryota</taxon>
        <taxon>Viridiplantae</taxon>
        <taxon>Streptophyta</taxon>
        <taxon>Embryophyta</taxon>
        <taxon>Tracheophyta</taxon>
        <taxon>Spermatophyta</taxon>
        <taxon>Magnoliopsida</taxon>
        <taxon>eudicotyledons</taxon>
        <taxon>Gunneridae</taxon>
        <taxon>Pentapetalae</taxon>
        <taxon>asterids</taxon>
        <taxon>campanulids</taxon>
        <taxon>Apiales</taxon>
        <taxon>Araliaceae</taxon>
        <taxon>Panax</taxon>
    </lineage>
</organism>